<feature type="signal peptide" evidence="4">
    <location>
        <begin position="1"/>
        <end position="25"/>
    </location>
</feature>
<feature type="chain" id="PRO_0000014367" description="Insulin-like growth factor-binding protein 1">
    <location>
        <begin position="26"/>
        <end position="262"/>
    </location>
</feature>
<feature type="domain" description="IGFBP N-terminal" evidence="6">
    <location>
        <begin position="28"/>
        <end position="108"/>
    </location>
</feature>
<feature type="domain" description="Thyroglobulin type-1" evidence="5">
    <location>
        <begin position="176"/>
        <end position="254"/>
    </location>
</feature>
<feature type="region of interest" description="Disordered" evidence="7">
    <location>
        <begin position="101"/>
        <end position="133"/>
    </location>
</feature>
<feature type="short sequence motif" description="Cell attachment site" evidence="1">
    <location>
        <begin position="249"/>
        <end position="251"/>
    </location>
</feature>
<feature type="compositionally biased region" description="Low complexity" evidence="7">
    <location>
        <begin position="121"/>
        <end position="131"/>
    </location>
</feature>
<feature type="modified residue" description="Phosphoserine" evidence="2">
    <location>
        <position position="126"/>
    </location>
</feature>
<feature type="modified residue" description="Phosphoserine" evidence="2">
    <location>
        <position position="129"/>
    </location>
</feature>
<feature type="modified residue" description="Phosphoserine" evidence="2">
    <location>
        <position position="147"/>
    </location>
</feature>
<feature type="modified residue" description="Phosphotyrosine" evidence="2">
    <location>
        <position position="161"/>
    </location>
</feature>
<feature type="modified residue" description="Phosphoserine" evidence="2">
    <location>
        <position position="245"/>
    </location>
</feature>
<feature type="disulfide bond" evidence="6">
    <location>
        <begin position="32"/>
        <end position="59"/>
    </location>
</feature>
<feature type="disulfide bond" evidence="6">
    <location>
        <begin position="35"/>
        <end position="61"/>
    </location>
</feature>
<feature type="disulfide bond" evidence="6">
    <location>
        <begin position="43"/>
        <end position="62"/>
    </location>
</feature>
<feature type="disulfide bond" evidence="6">
    <location>
        <begin position="50"/>
        <end position="65"/>
    </location>
</feature>
<feature type="disulfide bond" evidence="6">
    <location>
        <begin position="72"/>
        <end position="85"/>
    </location>
</feature>
<feature type="disulfide bond" evidence="6">
    <location>
        <begin position="79"/>
        <end position="105"/>
    </location>
</feature>
<feature type="disulfide bond" evidence="5">
    <location>
        <begin position="179"/>
        <end position="209"/>
    </location>
</feature>
<feature type="disulfide bond" evidence="5">
    <location>
        <begin position="220"/>
        <end position="231"/>
    </location>
</feature>
<feature type="disulfide bond" evidence="5">
    <location>
        <begin position="233"/>
        <end position="254"/>
    </location>
</feature>
<proteinExistence type="inferred from homology"/>
<name>IBP1_PIG</name>
<evidence type="ECO:0000250" key="1"/>
<evidence type="ECO:0000250" key="2">
    <source>
        <dbReference type="UniProtKB" id="P08833"/>
    </source>
</evidence>
<evidence type="ECO:0000250" key="3">
    <source>
        <dbReference type="UniProtKB" id="P21743"/>
    </source>
</evidence>
<evidence type="ECO:0000255" key="4"/>
<evidence type="ECO:0000255" key="5">
    <source>
        <dbReference type="PROSITE-ProRule" id="PRU00500"/>
    </source>
</evidence>
<evidence type="ECO:0000255" key="6">
    <source>
        <dbReference type="PROSITE-ProRule" id="PRU00653"/>
    </source>
</evidence>
<evidence type="ECO:0000256" key="7">
    <source>
        <dbReference type="SAM" id="MobiDB-lite"/>
    </source>
</evidence>
<gene>
    <name type="primary">IGFBP1</name>
</gene>
<keyword id="KW-1015">Disulfide bond</keyword>
<keyword id="KW-0340">Growth factor binding</keyword>
<keyword id="KW-0597">Phosphoprotein</keyword>
<keyword id="KW-1185">Reference proteome</keyword>
<keyword id="KW-0964">Secreted</keyword>
<keyword id="KW-0732">Signal</keyword>
<accession>Q75ZP3</accession>
<sequence length="262" mass="28331">MPEVPAVRAWPLLLSLALQLGAAAGAPQPLHCAPCSAERLALCPPVPASCPEATRPAGCGCCPTCALPLGACGVATARCARGLSCRALPGEPRPLHALTRGQGACMPAPSAEATETKDPAAPETTSPESTEMTQEQLLDSFHLMATSSEDLPILWNAINNYESMKALEATDIKKWKEPCQRELYKVLDRLAREQQKAGDRLYKFYLPNCNKNGFYHSKQCETSLEGEPGLCWCVYPWSGKKILGSTAVRGDPKCHQYFNSQN</sequence>
<reference key="1">
    <citation type="journal article" date="2005" name="Biochem. Genet.">
        <title>Assignment of the gene for porcine insulin-like growth factor binding protein 1 to chromosome 18 and detection of polymorphisms in intron 2 by PCR-RFLP.</title>
        <authorList>
            <person name="Inage-Miyake Y."/>
            <person name="Shimanuki S."/>
            <person name="Itoh T."/>
            <person name="Murakami Y."/>
            <person name="Kimura M."/>
            <person name="Suzuki H."/>
            <person name="Miyake M."/>
            <person name="Toki D."/>
            <person name="Uenishi H."/>
            <person name="Awata T."/>
            <person name="Hamasima N."/>
        </authorList>
    </citation>
    <scope>NUCLEOTIDE SEQUENCE [GENOMIC DNA]</scope>
</reference>
<comment type="function">
    <text evidence="2 3">Multifunctional protein that plays a critical role in regulating the availability of IGFs such as IGF1 and IGF2 to their receptors and thereby regulates IGF-mediated cellular processes including cell migration, proliferation, differentiation or apoptosis in a cell-type specific manner. Also plays a positive role in cell migration by interacting with integrin ITGA5:ITGB1 through its RGD motif. Mechanistically, binding to integrins leads to activation of focal adhesion kinase/PTK2 and stimulation of the mitogen-activated protein kinase (MAPK) pathway (By similarity). Regulates cardiomyocyte apoptosis by suppressing HIF-1alpha/HIF1A degradation through ubiquitination (By similarity).</text>
</comment>
<comment type="subunit">
    <text evidence="2 3">Binds equally well IGF1 and IGF2. Interacts with integrin ITGA5:ITGB1. Interacts with VHL; this interaction inhibits HIF1A degradation (By similarity).</text>
</comment>
<comment type="subcellular location">
    <subcellularLocation>
        <location evidence="2">Secreted</location>
    </subcellularLocation>
</comment>
<protein>
    <recommendedName>
        <fullName>Insulin-like growth factor-binding protein 1</fullName>
        <shortName>IBP-1</shortName>
        <shortName>IGF-binding protein 1</shortName>
        <shortName>IGFBP-1</shortName>
    </recommendedName>
</protein>
<organism>
    <name type="scientific">Sus scrofa</name>
    <name type="common">Pig</name>
    <dbReference type="NCBI Taxonomy" id="9823"/>
    <lineage>
        <taxon>Eukaryota</taxon>
        <taxon>Metazoa</taxon>
        <taxon>Chordata</taxon>
        <taxon>Craniata</taxon>
        <taxon>Vertebrata</taxon>
        <taxon>Euteleostomi</taxon>
        <taxon>Mammalia</taxon>
        <taxon>Eutheria</taxon>
        <taxon>Laurasiatheria</taxon>
        <taxon>Artiodactyla</taxon>
        <taxon>Suina</taxon>
        <taxon>Suidae</taxon>
        <taxon>Sus</taxon>
    </lineage>
</organism>
<dbReference type="EMBL" id="AB119126">
    <property type="protein sequence ID" value="BAC84982.1"/>
    <property type="molecule type" value="Genomic_DNA"/>
</dbReference>
<dbReference type="SMR" id="Q75ZP3"/>
<dbReference type="FunCoup" id="Q75ZP3">
    <property type="interactions" value="118"/>
</dbReference>
<dbReference type="STRING" id="9823.ENSSSCP00000017718"/>
<dbReference type="PaxDb" id="9823-ENSSSCP00000017718"/>
<dbReference type="eggNOG" id="ENOG502QWRP">
    <property type="taxonomic scope" value="Eukaryota"/>
</dbReference>
<dbReference type="InParanoid" id="Q75ZP3"/>
<dbReference type="Proteomes" id="UP000008227">
    <property type="component" value="Unplaced"/>
</dbReference>
<dbReference type="Proteomes" id="UP000314985">
    <property type="component" value="Unplaced"/>
</dbReference>
<dbReference type="Proteomes" id="UP000694570">
    <property type="component" value="Unplaced"/>
</dbReference>
<dbReference type="Proteomes" id="UP000694571">
    <property type="component" value="Unplaced"/>
</dbReference>
<dbReference type="Proteomes" id="UP000694720">
    <property type="component" value="Unplaced"/>
</dbReference>
<dbReference type="Proteomes" id="UP000694722">
    <property type="component" value="Unplaced"/>
</dbReference>
<dbReference type="Proteomes" id="UP000694723">
    <property type="component" value="Unplaced"/>
</dbReference>
<dbReference type="Proteomes" id="UP000694724">
    <property type="component" value="Unplaced"/>
</dbReference>
<dbReference type="Proteomes" id="UP000694725">
    <property type="component" value="Unplaced"/>
</dbReference>
<dbReference type="Proteomes" id="UP000694726">
    <property type="component" value="Unplaced"/>
</dbReference>
<dbReference type="Proteomes" id="UP000694727">
    <property type="component" value="Unplaced"/>
</dbReference>
<dbReference type="Proteomes" id="UP000694728">
    <property type="component" value="Unplaced"/>
</dbReference>
<dbReference type="GO" id="GO:0005615">
    <property type="term" value="C:extracellular space"/>
    <property type="evidence" value="ECO:0000318"/>
    <property type="project" value="GO_Central"/>
</dbReference>
<dbReference type="GO" id="GO:0031994">
    <property type="term" value="F:insulin-like growth factor I binding"/>
    <property type="evidence" value="ECO:0000318"/>
    <property type="project" value="GO_Central"/>
</dbReference>
<dbReference type="GO" id="GO:0031995">
    <property type="term" value="F:insulin-like growth factor II binding"/>
    <property type="evidence" value="ECO:0000318"/>
    <property type="project" value="GO_Central"/>
</dbReference>
<dbReference type="GO" id="GO:0043567">
    <property type="term" value="P:regulation of insulin-like growth factor receptor signaling pathway"/>
    <property type="evidence" value="ECO:0000318"/>
    <property type="project" value="GO_Central"/>
</dbReference>
<dbReference type="CDD" id="cd00191">
    <property type="entry name" value="TY"/>
    <property type="match status" value="1"/>
</dbReference>
<dbReference type="FunFam" id="4.10.40.20:FF:000001">
    <property type="entry name" value="Insulin-like growth factor binding protein 5"/>
    <property type="match status" value="1"/>
</dbReference>
<dbReference type="FunFam" id="4.10.800.10:FF:000002">
    <property type="entry name" value="Insulin-like growth factor-binding protein 2"/>
    <property type="match status" value="1"/>
</dbReference>
<dbReference type="Gene3D" id="4.10.40.20">
    <property type="match status" value="1"/>
</dbReference>
<dbReference type="Gene3D" id="4.10.800.10">
    <property type="entry name" value="Thyroglobulin type-1"/>
    <property type="match status" value="1"/>
</dbReference>
<dbReference type="InterPro" id="IPR009030">
    <property type="entry name" value="Growth_fac_rcpt_cys_sf"/>
</dbReference>
<dbReference type="InterPro" id="IPR000867">
    <property type="entry name" value="IGFBP-like"/>
</dbReference>
<dbReference type="InterPro" id="IPR022322">
    <property type="entry name" value="IGFBP1"/>
</dbReference>
<dbReference type="InterPro" id="IPR022321">
    <property type="entry name" value="IGFBP_1-6_chordata"/>
</dbReference>
<dbReference type="InterPro" id="IPR000716">
    <property type="entry name" value="Thyroglobulin_1"/>
</dbReference>
<dbReference type="InterPro" id="IPR036857">
    <property type="entry name" value="Thyroglobulin_1_sf"/>
</dbReference>
<dbReference type="PANTHER" id="PTHR11551">
    <property type="entry name" value="INSULIN-LIKE GROWTH FACTOR BINDING PROTEIN"/>
    <property type="match status" value="1"/>
</dbReference>
<dbReference type="PANTHER" id="PTHR11551:SF6">
    <property type="entry name" value="INSULIN-LIKE GROWTH FACTOR-BINDING PROTEIN 1"/>
    <property type="match status" value="1"/>
</dbReference>
<dbReference type="Pfam" id="PF00219">
    <property type="entry name" value="IGFBP"/>
    <property type="match status" value="1"/>
</dbReference>
<dbReference type="Pfam" id="PF00086">
    <property type="entry name" value="Thyroglobulin_1"/>
    <property type="match status" value="1"/>
</dbReference>
<dbReference type="PRINTS" id="PR01976">
    <property type="entry name" value="IGFBPFAMILY"/>
</dbReference>
<dbReference type="PRINTS" id="PR01977">
    <property type="entry name" value="IGFBPFAMILY1"/>
</dbReference>
<dbReference type="SMART" id="SM00121">
    <property type="entry name" value="IB"/>
    <property type="match status" value="1"/>
</dbReference>
<dbReference type="SMART" id="SM00211">
    <property type="entry name" value="TY"/>
    <property type="match status" value="1"/>
</dbReference>
<dbReference type="SUPFAM" id="SSF57184">
    <property type="entry name" value="Growth factor receptor domain"/>
    <property type="match status" value="1"/>
</dbReference>
<dbReference type="SUPFAM" id="SSF57610">
    <property type="entry name" value="Thyroglobulin type-1 domain"/>
    <property type="match status" value="1"/>
</dbReference>
<dbReference type="PROSITE" id="PS51323">
    <property type="entry name" value="IGFBP_N_2"/>
    <property type="match status" value="1"/>
</dbReference>
<dbReference type="PROSITE" id="PS00484">
    <property type="entry name" value="THYROGLOBULIN_1_1"/>
    <property type="match status" value="1"/>
</dbReference>
<dbReference type="PROSITE" id="PS51162">
    <property type="entry name" value="THYROGLOBULIN_1_2"/>
    <property type="match status" value="1"/>
</dbReference>